<keyword id="KW-0378">Hydrolase</keyword>
<keyword id="KW-0460">Magnesium</keyword>
<keyword id="KW-0479">Metal-binding</keyword>
<keyword id="KW-0547">Nucleotide-binding</keyword>
<keyword id="KW-1185">Reference proteome</keyword>
<feature type="chain" id="PRO_0000142536" description="3'(2'),5'-bisphosphate nucleotidase">
    <location>
        <begin position="1"/>
        <end position="353"/>
    </location>
</feature>
<feature type="active site" description="Proton acceptor" evidence="1">
    <location>
        <position position="50"/>
    </location>
</feature>
<feature type="active site" description="Proton acceptor" evidence="1">
    <location>
        <position position="141"/>
    </location>
</feature>
<feature type="binding site" evidence="1">
    <location>
        <position position="73"/>
    </location>
    <ligand>
        <name>Mg(2+)</name>
        <dbReference type="ChEBI" id="CHEBI:18420"/>
        <label>1</label>
    </ligand>
</feature>
<feature type="binding site" evidence="1">
    <location>
        <position position="73"/>
    </location>
    <ligand>
        <name>Mg(2+)</name>
        <dbReference type="ChEBI" id="CHEBI:18420"/>
        <label>3</label>
    </ligand>
</feature>
<feature type="binding site" evidence="1">
    <location>
        <position position="136"/>
    </location>
    <ligand>
        <name>Mg(2+)</name>
        <dbReference type="ChEBI" id="CHEBI:18420"/>
        <label>1</label>
    </ligand>
</feature>
<feature type="binding site" evidence="1">
    <location>
        <position position="136"/>
    </location>
    <ligand>
        <name>Mg(2+)</name>
        <dbReference type="ChEBI" id="CHEBI:18420"/>
        <label>2</label>
    </ligand>
</feature>
<feature type="binding site" evidence="1">
    <location>
        <position position="138"/>
    </location>
    <ligand>
        <name>Mg(2+)</name>
        <dbReference type="ChEBI" id="CHEBI:18420"/>
        <label>1</label>
    </ligand>
</feature>
<feature type="binding site" evidence="1">
    <location>
        <position position="139"/>
    </location>
    <ligand>
        <name>Mg(2+)</name>
        <dbReference type="ChEBI" id="CHEBI:18420"/>
        <label>2</label>
    </ligand>
</feature>
<feature type="binding site" evidence="1">
    <location>
        <position position="141"/>
    </location>
    <ligand>
        <name>adenosine 3',5'-bisphosphate</name>
        <dbReference type="ChEBI" id="CHEBI:58343"/>
    </ligand>
</feature>
<feature type="binding site" evidence="1">
    <location>
        <position position="232"/>
    </location>
    <ligand>
        <name>adenosine 3',5'-bisphosphate</name>
        <dbReference type="ChEBI" id="CHEBI:58343"/>
    </ligand>
</feature>
<feature type="binding site" evidence="1">
    <location>
        <position position="232"/>
    </location>
    <ligand>
        <name>AMP</name>
        <dbReference type="ChEBI" id="CHEBI:456215"/>
    </ligand>
</feature>
<feature type="binding site" evidence="1">
    <location>
        <position position="256"/>
    </location>
    <ligand>
        <name>adenosine 3',5'-bisphosphate</name>
        <dbReference type="ChEBI" id="CHEBI:58343"/>
    </ligand>
</feature>
<feature type="binding site" evidence="1">
    <location>
        <position position="256"/>
    </location>
    <ligand>
        <name>AMP</name>
        <dbReference type="ChEBI" id="CHEBI:456215"/>
    </ligand>
</feature>
<feature type="binding site" evidence="1">
    <location>
        <position position="259"/>
    </location>
    <ligand>
        <name>adenosine 3',5'-bisphosphate</name>
        <dbReference type="ChEBI" id="CHEBI:58343"/>
    </ligand>
</feature>
<feature type="binding site" evidence="1">
    <location>
        <position position="259"/>
    </location>
    <ligand>
        <name>AMP</name>
        <dbReference type="ChEBI" id="CHEBI:456215"/>
    </ligand>
</feature>
<feature type="binding site" evidence="1">
    <location>
        <position position="273"/>
    </location>
    <ligand>
        <name>adenosine 3',5'-bisphosphate</name>
        <dbReference type="ChEBI" id="CHEBI:58343"/>
    </ligand>
</feature>
<feature type="binding site" evidence="1">
    <location>
        <position position="273"/>
    </location>
    <ligand>
        <name>AMP</name>
        <dbReference type="ChEBI" id="CHEBI:456215"/>
    </ligand>
</feature>
<feature type="binding site" evidence="1">
    <location>
        <position position="286"/>
    </location>
    <ligand>
        <name>adenosine 3',5'-bisphosphate</name>
        <dbReference type="ChEBI" id="CHEBI:58343"/>
    </ligand>
</feature>
<feature type="binding site" evidence="1">
    <location>
        <position position="286"/>
    </location>
    <ligand>
        <name>AMP</name>
        <dbReference type="ChEBI" id="CHEBI:456215"/>
    </ligand>
</feature>
<feature type="binding site" evidence="1">
    <location>
        <position position="286"/>
    </location>
    <ligand>
        <name>Mg(2+)</name>
        <dbReference type="ChEBI" id="CHEBI:18420"/>
        <label>2</label>
    </ligand>
</feature>
<accession>O94505</accession>
<evidence type="ECO:0000250" key="1">
    <source>
        <dbReference type="UniProtKB" id="P32179"/>
    </source>
</evidence>
<evidence type="ECO:0000269" key="2">
    <source>
    </source>
</evidence>
<evidence type="ECO:0000303" key="3">
    <source>
    </source>
</evidence>
<evidence type="ECO:0000305" key="4"/>
<evidence type="ECO:0000305" key="5">
    <source>
    </source>
</evidence>
<organism>
    <name type="scientific">Schizosaccharomyces pombe (strain 972 / ATCC 24843)</name>
    <name type="common">Fission yeast</name>
    <dbReference type="NCBI Taxonomy" id="284812"/>
    <lineage>
        <taxon>Eukaryota</taxon>
        <taxon>Fungi</taxon>
        <taxon>Dikarya</taxon>
        <taxon>Ascomycota</taxon>
        <taxon>Taphrinomycotina</taxon>
        <taxon>Schizosaccharomycetes</taxon>
        <taxon>Schizosaccharomycetales</taxon>
        <taxon>Schizosaccharomycetaceae</taxon>
        <taxon>Schizosaccharomyces</taxon>
    </lineage>
</organism>
<sequence length="353" mass="38748">MSFDAEKQLAIAAVRRASYLTEKVFNQLIKEKSAAGALTKDDKSPVTIGDFGAQAIVISMLKDAFPNDPIVGEEDSDFLRENTQTCSRVWELVQETIQHATEYKELGQIKSAEEMMSIIDQGSYHGGRNGRMWTLDPIDGTKGFLRGAQYAICLALIENGKPVVSAIGCPNLPYDFNQPETSPKGIIMSAVRNHGCFQYSLHNEKLEPVQVHMQDVQNTKDSKFCEGVEAGHSMQGTQEEIAKYLGITRGPTKMDSQAKYASLARGDGDIYLRLPTKMTFEEKIWDHAGGSLLVEEAGGVVSDMFGKPLDFGVGRTLKNNNGVIAAYKGIFEKVIEATAAVTSKDPHFQKVAQ</sequence>
<gene>
    <name type="primary">tol1</name>
    <name type="ORF">SPCC1753.04</name>
</gene>
<reference key="1">
    <citation type="journal article" date="2000" name="J. Bacteriol.">
        <title>Tol1, a fission yeast phosphomonoesterase, is an in vivo target of lithium, and its deletion leads to sulfite auxotrophy.</title>
        <authorList>
            <person name="Miyamoto R."/>
            <person name="Sugiura R."/>
            <person name="Kamitani S."/>
            <person name="Yada T."/>
            <person name="Lu Y."/>
            <person name="Sio S.O."/>
            <person name="Asakura M."/>
            <person name="Matsuhisa A."/>
            <person name="Shuntoh H."/>
            <person name="Kuno T."/>
        </authorList>
    </citation>
    <scope>NUCLEOTIDE SEQUENCE [GENOMIC DNA]</scope>
    <scope>FUNCTION</scope>
    <scope>CATALYTIC ACTIVITY</scope>
    <scope>SUBSTRATE SPECIFICITY</scope>
    <scope>BIOPHYSICOCHEMICAL PROPERTIES</scope>
    <scope>COFACTOR</scope>
    <scope>ACTIVITY REGULATION</scope>
    <scope>DISRUPTION PHENOTYPE</scope>
</reference>
<reference key="2">
    <citation type="journal article" date="2002" name="Nature">
        <title>The genome sequence of Schizosaccharomyces pombe.</title>
        <authorList>
            <person name="Wood V."/>
            <person name="Gwilliam R."/>
            <person name="Rajandream M.A."/>
            <person name="Lyne M.H."/>
            <person name="Lyne R."/>
            <person name="Stewart A."/>
            <person name="Sgouros J.G."/>
            <person name="Peat N."/>
            <person name="Hayles J."/>
            <person name="Baker S.G."/>
            <person name="Basham D."/>
            <person name="Bowman S."/>
            <person name="Brooks K."/>
            <person name="Brown D."/>
            <person name="Brown S."/>
            <person name="Chillingworth T."/>
            <person name="Churcher C.M."/>
            <person name="Collins M."/>
            <person name="Connor R."/>
            <person name="Cronin A."/>
            <person name="Davis P."/>
            <person name="Feltwell T."/>
            <person name="Fraser A."/>
            <person name="Gentles S."/>
            <person name="Goble A."/>
            <person name="Hamlin N."/>
            <person name="Harris D.E."/>
            <person name="Hidalgo J."/>
            <person name="Hodgson G."/>
            <person name="Holroyd S."/>
            <person name="Hornsby T."/>
            <person name="Howarth S."/>
            <person name="Huckle E.J."/>
            <person name="Hunt S."/>
            <person name="Jagels K."/>
            <person name="James K.D."/>
            <person name="Jones L."/>
            <person name="Jones M."/>
            <person name="Leather S."/>
            <person name="McDonald S."/>
            <person name="McLean J."/>
            <person name="Mooney P."/>
            <person name="Moule S."/>
            <person name="Mungall K.L."/>
            <person name="Murphy L.D."/>
            <person name="Niblett D."/>
            <person name="Odell C."/>
            <person name="Oliver K."/>
            <person name="O'Neil S."/>
            <person name="Pearson D."/>
            <person name="Quail M.A."/>
            <person name="Rabbinowitsch E."/>
            <person name="Rutherford K.M."/>
            <person name="Rutter S."/>
            <person name="Saunders D."/>
            <person name="Seeger K."/>
            <person name="Sharp S."/>
            <person name="Skelton J."/>
            <person name="Simmonds M.N."/>
            <person name="Squares R."/>
            <person name="Squares S."/>
            <person name="Stevens K."/>
            <person name="Taylor K."/>
            <person name="Taylor R.G."/>
            <person name="Tivey A."/>
            <person name="Walsh S.V."/>
            <person name="Warren T."/>
            <person name="Whitehead S."/>
            <person name="Woodward J.R."/>
            <person name="Volckaert G."/>
            <person name="Aert R."/>
            <person name="Robben J."/>
            <person name="Grymonprez B."/>
            <person name="Weltjens I."/>
            <person name="Vanstreels E."/>
            <person name="Rieger M."/>
            <person name="Schaefer M."/>
            <person name="Mueller-Auer S."/>
            <person name="Gabel C."/>
            <person name="Fuchs M."/>
            <person name="Duesterhoeft A."/>
            <person name="Fritzc C."/>
            <person name="Holzer E."/>
            <person name="Moestl D."/>
            <person name="Hilbert H."/>
            <person name="Borzym K."/>
            <person name="Langer I."/>
            <person name="Beck A."/>
            <person name="Lehrach H."/>
            <person name="Reinhardt R."/>
            <person name="Pohl T.M."/>
            <person name="Eger P."/>
            <person name="Zimmermann W."/>
            <person name="Wedler H."/>
            <person name="Wambutt R."/>
            <person name="Purnelle B."/>
            <person name="Goffeau A."/>
            <person name="Cadieu E."/>
            <person name="Dreano S."/>
            <person name="Gloux S."/>
            <person name="Lelaure V."/>
            <person name="Mottier S."/>
            <person name="Galibert F."/>
            <person name="Aves S.J."/>
            <person name="Xiang Z."/>
            <person name="Hunt C."/>
            <person name="Moore K."/>
            <person name="Hurst S.M."/>
            <person name="Lucas M."/>
            <person name="Rochet M."/>
            <person name="Gaillardin C."/>
            <person name="Tallada V.A."/>
            <person name="Garzon A."/>
            <person name="Thode G."/>
            <person name="Daga R.R."/>
            <person name="Cruzado L."/>
            <person name="Jimenez J."/>
            <person name="Sanchez M."/>
            <person name="del Rey F."/>
            <person name="Benito J."/>
            <person name="Dominguez A."/>
            <person name="Revuelta J.L."/>
            <person name="Moreno S."/>
            <person name="Armstrong J."/>
            <person name="Forsburg S.L."/>
            <person name="Cerutti L."/>
            <person name="Lowe T."/>
            <person name="McCombie W.R."/>
            <person name="Paulsen I."/>
            <person name="Potashkin J."/>
            <person name="Shpakovski G.V."/>
            <person name="Ussery D."/>
            <person name="Barrell B.G."/>
            <person name="Nurse P."/>
        </authorList>
    </citation>
    <scope>NUCLEOTIDE SEQUENCE [LARGE SCALE GENOMIC DNA]</scope>
    <source>
        <strain>972 / ATCC 24843</strain>
    </source>
</reference>
<proteinExistence type="evidence at protein level"/>
<protein>
    <recommendedName>
        <fullName evidence="3">3'(2'),5'-bisphosphate nucleotidase</fullName>
        <ecNumber evidence="2">3.1.3.7</ecNumber>
    </recommendedName>
    <alternativeName>
        <fullName>3'(2'),5-bisphosphonucleoside 3'(2')-phosphohydrolase</fullName>
    </alternativeName>
    <alternativeName>
        <fullName>DPNPase</fullName>
    </alternativeName>
    <alternativeName>
        <fullName>Halotolerance protein tol1</fullName>
    </alternativeName>
    <alternativeName>
        <fullName evidence="3">Inositol-polyphosphate 1-phosphatase</fullName>
        <ecNumber evidence="2">3.1.3.57</ecNumber>
    </alternativeName>
    <alternativeName>
        <fullName>Target of lithium protein 1</fullName>
    </alternativeName>
</protein>
<comment type="function">
    <text evidence="2">Phosphatase that converts adenosine 3'-phosphate 5'-phosphosulfate (PAPS) to adenosine 5'-phosphosulfate (APS) and 3'(2')-phosphoadenosine 5'-phosphate (PAP) to AMP. May regulate the flux of sulfur in the sulfur-activation pathway by converting PAPS to APS. Is also able to hydrolyze inositol 1,4-bisphosphate (Ins(1,4)P2) and inositol 1,3,4-trisphosphate (Ins(1,3,4)P3), but is not active on inositol 1,4,5-trisphosphate, inositol 1-phosphate, fructose 1,6-bisphosphate, AMP and ATP.</text>
</comment>
<comment type="function">
    <text evidence="2">Confers resistance to lithium.</text>
</comment>
<comment type="catalytic activity">
    <reaction evidence="2">
        <text>3'-phosphoadenylyl sulfate + H2O = adenosine 5'-phosphosulfate + phosphate</text>
        <dbReference type="Rhea" id="RHEA:77639"/>
        <dbReference type="ChEBI" id="CHEBI:15377"/>
        <dbReference type="ChEBI" id="CHEBI:43474"/>
        <dbReference type="ChEBI" id="CHEBI:58243"/>
        <dbReference type="ChEBI" id="CHEBI:58339"/>
        <dbReference type="EC" id="3.1.3.7"/>
    </reaction>
    <physiologicalReaction direction="left-to-right" evidence="5">
        <dbReference type="Rhea" id="RHEA:77640"/>
    </physiologicalReaction>
</comment>
<comment type="catalytic activity">
    <reaction evidence="2">
        <text>adenosine 3',5'-bisphosphate + H2O = AMP + phosphate</text>
        <dbReference type="Rhea" id="RHEA:10040"/>
        <dbReference type="ChEBI" id="CHEBI:15377"/>
        <dbReference type="ChEBI" id="CHEBI:43474"/>
        <dbReference type="ChEBI" id="CHEBI:58343"/>
        <dbReference type="ChEBI" id="CHEBI:456215"/>
        <dbReference type="EC" id="3.1.3.7"/>
    </reaction>
    <physiologicalReaction direction="left-to-right" evidence="5">
        <dbReference type="Rhea" id="RHEA:10041"/>
    </physiologicalReaction>
</comment>
<comment type="catalytic activity">
    <reaction evidence="2">
        <text>adenosine 2',5'-bisphosphate + H2O = AMP + phosphate</text>
        <dbReference type="Rhea" id="RHEA:77643"/>
        <dbReference type="ChEBI" id="CHEBI:15377"/>
        <dbReference type="ChEBI" id="CHEBI:43474"/>
        <dbReference type="ChEBI" id="CHEBI:194156"/>
        <dbReference type="ChEBI" id="CHEBI:456215"/>
        <dbReference type="EC" id="3.1.3.7"/>
    </reaction>
    <physiologicalReaction direction="left-to-right" evidence="5">
        <dbReference type="Rhea" id="RHEA:77644"/>
    </physiologicalReaction>
</comment>
<comment type="catalytic activity">
    <reaction evidence="2">
        <text>1D-myo-inositol 1,4-bisphosphate + H2O = 1D-myo-inositol 4-phosphate + phosphate</text>
        <dbReference type="Rhea" id="RHEA:15553"/>
        <dbReference type="ChEBI" id="CHEBI:15377"/>
        <dbReference type="ChEBI" id="CHEBI:43474"/>
        <dbReference type="ChEBI" id="CHEBI:58282"/>
        <dbReference type="ChEBI" id="CHEBI:58469"/>
        <dbReference type="EC" id="3.1.3.57"/>
    </reaction>
    <physiologicalReaction direction="left-to-right" evidence="5">
        <dbReference type="Rhea" id="RHEA:15554"/>
    </physiologicalReaction>
</comment>
<comment type="catalytic activity">
    <reaction evidence="2">
        <text>1D-myo-inositol 1,3,4-trisphosphate + H2O = 1D-myo-inositol 3,4-bisphosphate + phosphate</text>
        <dbReference type="Rhea" id="RHEA:70319"/>
        <dbReference type="ChEBI" id="CHEBI:15377"/>
        <dbReference type="ChEBI" id="CHEBI:43474"/>
        <dbReference type="ChEBI" id="CHEBI:58414"/>
        <dbReference type="ChEBI" id="CHEBI:83241"/>
    </reaction>
    <physiologicalReaction direction="left-to-right" evidence="5">
        <dbReference type="Rhea" id="RHEA:70320"/>
    </physiologicalReaction>
</comment>
<comment type="cofactor">
    <cofactor evidence="2">
        <name>Mg(2+)</name>
        <dbReference type="ChEBI" id="CHEBI:18420"/>
    </cofactor>
    <text evidence="1">Binds 3 Mg(2+) ions per subunit.</text>
</comment>
<comment type="activity regulation">
    <text evidence="2">Inhibited by Li(+) and Na(+).</text>
</comment>
<comment type="biophysicochemical properties">
    <kinetics>
        <KM evidence="2">77 uM for 1D-myo-inositol 1,4-bisphosphate</KM>
        <text evidence="2">KM for adenosine 3',5'-bisphosphate is below 10 uM.</text>
    </kinetics>
</comment>
<comment type="disruption phenotype">
    <text evidence="2">Deletion of this gene leads to sulfite auxotrophy.</text>
</comment>
<comment type="similarity">
    <text evidence="4">Belongs to the inositol monophosphatase superfamily.</text>
</comment>
<dbReference type="EC" id="3.1.3.7" evidence="2"/>
<dbReference type="EC" id="3.1.3.57" evidence="2"/>
<dbReference type="EMBL" id="D86083">
    <property type="protein sequence ID" value="BAA96866.1"/>
    <property type="molecule type" value="Genomic_DNA"/>
</dbReference>
<dbReference type="EMBL" id="CU329672">
    <property type="protein sequence ID" value="CAA22778.1"/>
    <property type="molecule type" value="Genomic_DNA"/>
</dbReference>
<dbReference type="PIR" id="T41127">
    <property type="entry name" value="T41127"/>
</dbReference>
<dbReference type="RefSeq" id="NP_588230.1">
    <property type="nucleotide sequence ID" value="NM_001023220.2"/>
</dbReference>
<dbReference type="SMR" id="O94505"/>
<dbReference type="BioGRID" id="275528">
    <property type="interactions" value="22"/>
</dbReference>
<dbReference type="FunCoup" id="O94505">
    <property type="interactions" value="79"/>
</dbReference>
<dbReference type="STRING" id="284812.O94505"/>
<dbReference type="iPTMnet" id="O94505"/>
<dbReference type="PaxDb" id="4896-SPCC1753.04.1"/>
<dbReference type="EnsemblFungi" id="SPCC1753.04.1">
    <property type="protein sequence ID" value="SPCC1753.04.1:pep"/>
    <property type="gene ID" value="SPCC1753.04"/>
</dbReference>
<dbReference type="GeneID" id="2538954"/>
<dbReference type="KEGG" id="spo:2538954"/>
<dbReference type="PomBase" id="SPCC1753.04">
    <property type="gene designation" value="tol1"/>
</dbReference>
<dbReference type="VEuPathDB" id="FungiDB:SPCC1753.04"/>
<dbReference type="eggNOG" id="KOG1528">
    <property type="taxonomic scope" value="Eukaryota"/>
</dbReference>
<dbReference type="HOGENOM" id="CLU_033446_1_1_1"/>
<dbReference type="InParanoid" id="O94505"/>
<dbReference type="OMA" id="MSYQQER"/>
<dbReference type="PhylomeDB" id="O94505"/>
<dbReference type="PRO" id="PR:O94505"/>
<dbReference type="Proteomes" id="UP000002485">
    <property type="component" value="Chromosome III"/>
</dbReference>
<dbReference type="GO" id="GO:0005829">
    <property type="term" value="C:cytosol"/>
    <property type="evidence" value="ECO:0007005"/>
    <property type="project" value="PomBase"/>
</dbReference>
<dbReference type="GO" id="GO:0005634">
    <property type="term" value="C:nucleus"/>
    <property type="evidence" value="ECO:0007005"/>
    <property type="project" value="PomBase"/>
</dbReference>
<dbReference type="GO" id="GO:0008441">
    <property type="term" value="F:3'(2'),5'-bisphosphate nucleotidase activity"/>
    <property type="evidence" value="ECO:0000314"/>
    <property type="project" value="PomBase"/>
</dbReference>
<dbReference type="GO" id="GO:0052829">
    <property type="term" value="F:inositol-1,3,4-trisphosphate 1-phosphatase activity"/>
    <property type="evidence" value="ECO:0000314"/>
    <property type="project" value="PomBase"/>
</dbReference>
<dbReference type="GO" id="GO:0004441">
    <property type="term" value="F:inositol-1,4-bisphosphate 1-phosphatase activity"/>
    <property type="evidence" value="ECO:0000314"/>
    <property type="project" value="PomBase"/>
</dbReference>
<dbReference type="GO" id="GO:0046872">
    <property type="term" value="F:metal ion binding"/>
    <property type="evidence" value="ECO:0007669"/>
    <property type="project" value="UniProtKB-KW"/>
</dbReference>
<dbReference type="GO" id="GO:0000166">
    <property type="term" value="F:nucleotide binding"/>
    <property type="evidence" value="ECO:0007669"/>
    <property type="project" value="UniProtKB-KW"/>
</dbReference>
<dbReference type="GO" id="GO:0046854">
    <property type="term" value="P:phosphatidylinositol phosphate biosynthetic process"/>
    <property type="evidence" value="ECO:0007669"/>
    <property type="project" value="InterPro"/>
</dbReference>
<dbReference type="GO" id="GO:0180037">
    <property type="term" value="P:rapid tRNA decay"/>
    <property type="evidence" value="ECO:0000269"/>
    <property type="project" value="PomBase"/>
</dbReference>
<dbReference type="GO" id="GO:0000103">
    <property type="term" value="P:sulfate assimilation"/>
    <property type="evidence" value="ECO:0000315"/>
    <property type="project" value="PomBase"/>
</dbReference>
<dbReference type="CDD" id="cd01517">
    <property type="entry name" value="PAP_phosphatase"/>
    <property type="match status" value="1"/>
</dbReference>
<dbReference type="FunFam" id="3.30.540.10:FF:000015">
    <property type="entry name" value="3',5'-bisphosphate nucleotidase"/>
    <property type="match status" value="1"/>
</dbReference>
<dbReference type="FunFam" id="3.40.190.80:FF:000003">
    <property type="entry name" value="PAP-specific phosphatase HAL2-like"/>
    <property type="match status" value="1"/>
</dbReference>
<dbReference type="Gene3D" id="3.40.190.80">
    <property type="match status" value="1"/>
</dbReference>
<dbReference type="Gene3D" id="3.30.540.10">
    <property type="entry name" value="Fructose-1,6-Bisphosphatase, subunit A, domain 1"/>
    <property type="match status" value="1"/>
</dbReference>
<dbReference type="InterPro" id="IPR006239">
    <property type="entry name" value="DPNP"/>
</dbReference>
<dbReference type="InterPro" id="IPR020583">
    <property type="entry name" value="Inositol_monoP_metal-BS"/>
</dbReference>
<dbReference type="InterPro" id="IPR051090">
    <property type="entry name" value="Inositol_monoP_superfamily"/>
</dbReference>
<dbReference type="InterPro" id="IPR000760">
    <property type="entry name" value="Inositol_monophosphatase-like"/>
</dbReference>
<dbReference type="InterPro" id="IPR020550">
    <property type="entry name" value="Inositol_monophosphatase_CS"/>
</dbReference>
<dbReference type="NCBIfam" id="TIGR01330">
    <property type="entry name" value="bisphos_HAL2"/>
    <property type="match status" value="1"/>
</dbReference>
<dbReference type="PANTHER" id="PTHR43200:SF6">
    <property type="entry name" value="3'(2'),5'-BISPHOSPHATE NUCLEOTIDASE"/>
    <property type="match status" value="1"/>
</dbReference>
<dbReference type="PANTHER" id="PTHR43200">
    <property type="entry name" value="PHOSPHATASE"/>
    <property type="match status" value="1"/>
</dbReference>
<dbReference type="Pfam" id="PF00459">
    <property type="entry name" value="Inositol_P"/>
    <property type="match status" value="1"/>
</dbReference>
<dbReference type="PRINTS" id="PR00377">
    <property type="entry name" value="IMPHPHTASES"/>
</dbReference>
<dbReference type="SUPFAM" id="SSF56655">
    <property type="entry name" value="Carbohydrate phosphatase"/>
    <property type="match status" value="1"/>
</dbReference>
<dbReference type="PROSITE" id="PS00629">
    <property type="entry name" value="IMP_1"/>
    <property type="match status" value="1"/>
</dbReference>
<dbReference type="PROSITE" id="PS00630">
    <property type="entry name" value="IMP_2"/>
    <property type="match status" value="1"/>
</dbReference>
<name>DPNP_SCHPO</name>